<sequence length="338" mass="37013">MKSVGINGYGTIGKRVADAVSAQDDMKIVGVTKRSPDFEARMAVENGYDLYISVPERESSFEEAGIKVTGTADELLEKLDIVVDCTPEGIGAKNKEGTYEKMGLKAIFQGGEKHDQIGLSFNSFSNYNDVIGKDYARVVSCNTTGLCRTLNPINDLCGIKKVRAVMVRRGADPGQVKKGPINAIVPNPPTVPSHHGPDVQTVMYDLNITTMALLVPTTLMHQHNLMVELESSVSVDDIKEKLNETPRVLLLKAGEGLTSTAGFMEYAKDLGRSRNDLFEIGVWEESLNIVDGELYYMQAIHQESDVVPENVDAIRAMLEMENDPSKSIQKTNKAMGIL</sequence>
<keyword id="KW-0963">Cytoplasm</keyword>
<keyword id="KW-0324">Glycolysis</keyword>
<keyword id="KW-0520">NAD</keyword>
<keyword id="KW-0521">NADP</keyword>
<keyword id="KW-0560">Oxidoreductase</keyword>
<reference key="1">
    <citation type="journal article" date="1989" name="Eur. J. Biochem.">
        <title>Nucleotide sequence of the glyceraldehyde-3-phosphate dehydrogenase gene from the mesophilic methanogenic archaebacteria Methanobacterium bryantii and Methanobacterium formicicum. Comparison with the respective gene structure of the closely related extreme thermophile Methanothermus fervidus.</title>
        <authorList>
            <person name="Fabry S."/>
            <person name="Lang J."/>
            <person name="Niermann T."/>
            <person name="Vingron M."/>
            <person name="Hensel R."/>
        </authorList>
    </citation>
    <scope>NUCLEOTIDE SEQUENCE [GENOMIC DNA]</scope>
    <source>
        <strain>DSM 862</strain>
    </source>
</reference>
<dbReference type="EC" id="1.2.1.59"/>
<dbReference type="EMBL" id="X14631">
    <property type="protein sequence ID" value="CAA32780.1"/>
    <property type="molecule type" value="Genomic_DNA"/>
</dbReference>
<dbReference type="PIR" id="S02804">
    <property type="entry name" value="S02804"/>
</dbReference>
<dbReference type="SMR" id="P19314"/>
<dbReference type="UniPathway" id="UPA00109">
    <property type="reaction ID" value="UER00184"/>
</dbReference>
<dbReference type="GO" id="GO:0005737">
    <property type="term" value="C:cytoplasm"/>
    <property type="evidence" value="ECO:0007669"/>
    <property type="project" value="UniProtKB-SubCell"/>
</dbReference>
<dbReference type="GO" id="GO:0008839">
    <property type="term" value="F:4-hydroxy-tetrahydrodipicolinate reductase"/>
    <property type="evidence" value="ECO:0007669"/>
    <property type="project" value="InterPro"/>
</dbReference>
<dbReference type="GO" id="GO:0004365">
    <property type="term" value="F:glyceraldehyde-3-phosphate dehydrogenase (NAD+) (phosphorylating) activity"/>
    <property type="evidence" value="ECO:0007669"/>
    <property type="project" value="UniProtKB-UniRule"/>
</dbReference>
<dbReference type="GO" id="GO:0047100">
    <property type="term" value="F:glyceraldehyde-3-phosphate dehydrogenase (NADP+) (phosphorylating) activity"/>
    <property type="evidence" value="ECO:0007669"/>
    <property type="project" value="RHEA"/>
</dbReference>
<dbReference type="GO" id="GO:0051287">
    <property type="term" value="F:NAD binding"/>
    <property type="evidence" value="ECO:0007669"/>
    <property type="project" value="InterPro"/>
</dbReference>
<dbReference type="GO" id="GO:0050661">
    <property type="term" value="F:NADP binding"/>
    <property type="evidence" value="ECO:0007669"/>
    <property type="project" value="InterPro"/>
</dbReference>
<dbReference type="GO" id="GO:0006096">
    <property type="term" value="P:glycolytic process"/>
    <property type="evidence" value="ECO:0007669"/>
    <property type="project" value="UniProtKB-UniRule"/>
</dbReference>
<dbReference type="GO" id="GO:0009089">
    <property type="term" value="P:lysine biosynthetic process via diaminopimelate"/>
    <property type="evidence" value="ECO:0007669"/>
    <property type="project" value="InterPro"/>
</dbReference>
<dbReference type="CDD" id="cd18127">
    <property type="entry name" value="GAPDH_II_C"/>
    <property type="match status" value="1"/>
</dbReference>
<dbReference type="CDD" id="cd02278">
    <property type="entry name" value="GAPDH_II_N"/>
    <property type="match status" value="1"/>
</dbReference>
<dbReference type="Gene3D" id="3.30.360.10">
    <property type="entry name" value="Dihydrodipicolinate Reductase, domain 2"/>
    <property type="match status" value="1"/>
</dbReference>
<dbReference type="Gene3D" id="3.40.50.720">
    <property type="entry name" value="NAD(P)-binding Rossmann-like Domain"/>
    <property type="match status" value="1"/>
</dbReference>
<dbReference type="HAMAP" id="MF_00559">
    <property type="entry name" value="G3P_dehdrog_arch"/>
    <property type="match status" value="1"/>
</dbReference>
<dbReference type="InterPro" id="IPR000846">
    <property type="entry name" value="DapB_N"/>
</dbReference>
<dbReference type="InterPro" id="IPR020831">
    <property type="entry name" value="GlycerAld/Erythrose_P_DH"/>
</dbReference>
<dbReference type="InterPro" id="IPR020830">
    <property type="entry name" value="GlycerAld_3-P_DH_AS"/>
</dbReference>
<dbReference type="InterPro" id="IPR020829">
    <property type="entry name" value="GlycerAld_3-P_DH_cat"/>
</dbReference>
<dbReference type="InterPro" id="IPR020828">
    <property type="entry name" value="GlycerAld_3-P_DH_NAD(P)-bd"/>
</dbReference>
<dbReference type="InterPro" id="IPR006436">
    <property type="entry name" value="Glyceraldehyde-3-P_DH_2_arc"/>
</dbReference>
<dbReference type="InterPro" id="IPR036291">
    <property type="entry name" value="NAD(P)-bd_dom_sf"/>
</dbReference>
<dbReference type="NCBIfam" id="TIGR01546">
    <property type="entry name" value="GAPDH-II_archae"/>
    <property type="match status" value="1"/>
</dbReference>
<dbReference type="NCBIfam" id="NF003251">
    <property type="entry name" value="PRK04207.1"/>
    <property type="match status" value="1"/>
</dbReference>
<dbReference type="Pfam" id="PF01113">
    <property type="entry name" value="DapB_N"/>
    <property type="match status" value="1"/>
</dbReference>
<dbReference type="Pfam" id="PF02800">
    <property type="entry name" value="Gp_dh_C"/>
    <property type="match status" value="1"/>
</dbReference>
<dbReference type="PIRSF" id="PIRSF000149">
    <property type="entry name" value="GAP_DH"/>
    <property type="match status" value="1"/>
</dbReference>
<dbReference type="SMART" id="SM00846">
    <property type="entry name" value="Gp_dh_N"/>
    <property type="match status" value="1"/>
</dbReference>
<dbReference type="SUPFAM" id="SSF55347">
    <property type="entry name" value="Glyceraldehyde-3-phosphate dehydrogenase-like, C-terminal domain"/>
    <property type="match status" value="1"/>
</dbReference>
<dbReference type="SUPFAM" id="SSF51735">
    <property type="entry name" value="NAD(P)-binding Rossmann-fold domains"/>
    <property type="match status" value="1"/>
</dbReference>
<dbReference type="PROSITE" id="PS00071">
    <property type="entry name" value="GAPDH"/>
    <property type="match status" value="1"/>
</dbReference>
<name>G3P_METBR</name>
<protein>
    <recommendedName>
        <fullName>Glyceraldehyde-3-phosphate dehydrogenase</fullName>
        <shortName>GAPDH</shortName>
        <ecNumber>1.2.1.59</ecNumber>
    </recommendedName>
    <alternativeName>
        <fullName>NAD(P)-dependent glyceraldehyde-3-phosphate dehydrogenase</fullName>
    </alternativeName>
</protein>
<accession>P19314</accession>
<feature type="chain" id="PRO_0000145720" description="Glyceraldehyde-3-phosphate dehydrogenase">
    <location>
        <begin position="1"/>
        <end position="338"/>
    </location>
</feature>
<feature type="active site" description="Nucleophile" evidence="1">
    <location>
        <position position="141"/>
    </location>
</feature>
<feature type="binding site" evidence="1">
    <location>
        <begin position="11"/>
        <end position="12"/>
    </location>
    <ligand>
        <name>NAD(+)</name>
        <dbReference type="ChEBI" id="CHEBI:57540"/>
    </ligand>
</feature>
<feature type="binding site" evidence="1">
    <location>
        <position position="111"/>
    </location>
    <ligand>
        <name>NAD(+)</name>
        <dbReference type="ChEBI" id="CHEBI:57540"/>
    </ligand>
</feature>
<feature type="binding site" evidence="1">
    <location>
        <begin position="140"/>
        <end position="142"/>
    </location>
    <ligand>
        <name>D-glyceraldehyde 3-phosphate</name>
        <dbReference type="ChEBI" id="CHEBI:59776"/>
    </ligand>
</feature>
<feature type="binding site" evidence="1">
    <location>
        <position position="169"/>
    </location>
    <ligand>
        <name>NAD(+)</name>
        <dbReference type="ChEBI" id="CHEBI:57540"/>
    </ligand>
</feature>
<feature type="binding site" evidence="1">
    <location>
        <begin position="195"/>
        <end position="196"/>
    </location>
    <ligand>
        <name>D-glyceraldehyde 3-phosphate</name>
        <dbReference type="ChEBI" id="CHEBI:59776"/>
    </ligand>
</feature>
<feature type="binding site" evidence="1">
    <location>
        <position position="302"/>
    </location>
    <ligand>
        <name>NAD(+)</name>
        <dbReference type="ChEBI" id="CHEBI:57540"/>
    </ligand>
</feature>
<proteinExistence type="inferred from homology"/>
<gene>
    <name type="primary">gap</name>
</gene>
<comment type="catalytic activity">
    <reaction>
        <text>D-glyceraldehyde 3-phosphate + phosphate + NADP(+) = (2R)-3-phospho-glyceroyl phosphate + NADPH + H(+)</text>
        <dbReference type="Rhea" id="RHEA:10296"/>
        <dbReference type="ChEBI" id="CHEBI:15378"/>
        <dbReference type="ChEBI" id="CHEBI:43474"/>
        <dbReference type="ChEBI" id="CHEBI:57604"/>
        <dbReference type="ChEBI" id="CHEBI:57783"/>
        <dbReference type="ChEBI" id="CHEBI:58349"/>
        <dbReference type="ChEBI" id="CHEBI:59776"/>
        <dbReference type="EC" id="1.2.1.59"/>
    </reaction>
</comment>
<comment type="catalytic activity">
    <reaction>
        <text>D-glyceraldehyde 3-phosphate + phosphate + NAD(+) = (2R)-3-phospho-glyceroyl phosphate + NADH + H(+)</text>
        <dbReference type="Rhea" id="RHEA:10300"/>
        <dbReference type="ChEBI" id="CHEBI:15378"/>
        <dbReference type="ChEBI" id="CHEBI:43474"/>
        <dbReference type="ChEBI" id="CHEBI:57540"/>
        <dbReference type="ChEBI" id="CHEBI:57604"/>
        <dbReference type="ChEBI" id="CHEBI:57945"/>
        <dbReference type="ChEBI" id="CHEBI:59776"/>
        <dbReference type="EC" id="1.2.1.59"/>
    </reaction>
</comment>
<comment type="pathway">
    <text>Carbohydrate degradation; glycolysis; pyruvate from D-glyceraldehyde 3-phosphate: step 1/5.</text>
</comment>
<comment type="subunit">
    <text evidence="1">Homotetramer.</text>
</comment>
<comment type="subcellular location">
    <subcellularLocation>
        <location evidence="1">Cytoplasm</location>
    </subcellularLocation>
</comment>
<comment type="similarity">
    <text evidence="2">Belongs to the glyceraldehyde-3-phosphate dehydrogenase family.</text>
</comment>
<evidence type="ECO:0000250" key="1"/>
<evidence type="ECO:0000305" key="2"/>
<organism>
    <name type="scientific">Methanobacterium bryantii</name>
    <dbReference type="NCBI Taxonomy" id="2161"/>
    <lineage>
        <taxon>Archaea</taxon>
        <taxon>Methanobacteriati</taxon>
        <taxon>Methanobacteriota</taxon>
        <taxon>Methanomada group</taxon>
        <taxon>Methanobacteria</taxon>
        <taxon>Methanobacteriales</taxon>
        <taxon>Methanobacteriaceae</taxon>
        <taxon>Methanobacterium</taxon>
    </lineage>
</organism>